<dbReference type="EC" id="2.5.1.18" evidence="2"/>
<dbReference type="EMBL" id="X53451">
    <property type="protein sequence ID" value="CAA37529.1"/>
    <property type="molecule type" value="mRNA"/>
</dbReference>
<dbReference type="EMBL" id="X76143">
    <property type="status" value="NOT_ANNOTATED_CDS"/>
    <property type="molecule type" value="Genomic_DNA"/>
</dbReference>
<dbReference type="EMBL" id="U15654">
    <property type="protein sequence ID" value="AAA64837.1"/>
    <property type="molecule type" value="Genomic_DNA"/>
</dbReference>
<dbReference type="EMBL" id="D30687">
    <property type="protein sequence ID" value="BAA06349.1"/>
    <property type="molecule type" value="mRNA"/>
</dbReference>
<dbReference type="EMBL" id="BC002048">
    <property type="protein sequence ID" value="AAH02048.1"/>
    <property type="molecule type" value="mRNA"/>
</dbReference>
<dbReference type="EMBL" id="BC061109">
    <property type="protein sequence ID" value="AAH61109.1"/>
    <property type="molecule type" value="mRNA"/>
</dbReference>
<dbReference type="EMBL" id="AK079144">
    <property type="protein sequence ID" value="BAC37560.1"/>
    <property type="molecule type" value="mRNA"/>
</dbReference>
<dbReference type="CCDS" id="CCDS29411.1"/>
<dbReference type="PIR" id="S12709">
    <property type="entry name" value="B55140"/>
</dbReference>
<dbReference type="RefSeq" id="NP_038569.1">
    <property type="nucleotide sequence ID" value="NM_013541.1"/>
</dbReference>
<dbReference type="PDB" id="1BAY">
    <property type="method" value="X-ray"/>
    <property type="resolution" value="2.00 A"/>
    <property type="chains" value="A/B=2-210"/>
</dbReference>
<dbReference type="PDB" id="1GLP">
    <property type="method" value="X-ray"/>
    <property type="resolution" value="1.90 A"/>
    <property type="chains" value="A/B=2-210"/>
</dbReference>
<dbReference type="PDB" id="1GLQ">
    <property type="method" value="X-ray"/>
    <property type="resolution" value="1.80 A"/>
    <property type="chains" value="A/B=2-210"/>
</dbReference>
<dbReference type="PDB" id="1GSY">
    <property type="method" value="X-ray"/>
    <property type="resolution" value="2.44 A"/>
    <property type="chains" value="A/B=2-210"/>
</dbReference>
<dbReference type="PDB" id="1GTI">
    <property type="method" value="X-ray"/>
    <property type="resolution" value="3.00 A"/>
    <property type="chains" value="A/B/C/D/E/F=2-210"/>
</dbReference>
<dbReference type="PDB" id="2GLR">
    <property type="method" value="X-ray"/>
    <property type="resolution" value="2.20 A"/>
    <property type="chains" value="A/B=2-210"/>
</dbReference>
<dbReference type="PDB" id="2OA7">
    <property type="method" value="X-ray"/>
    <property type="resolution" value="2.20 A"/>
    <property type="chains" value="A/B=2-210"/>
</dbReference>
<dbReference type="PDB" id="2OAC">
    <property type="method" value="X-ray"/>
    <property type="resolution" value="2.20 A"/>
    <property type="chains" value="A/B=2-210"/>
</dbReference>
<dbReference type="PDB" id="2OAD">
    <property type="method" value="X-ray"/>
    <property type="resolution" value="2.50 A"/>
    <property type="chains" value="A/B=2-210"/>
</dbReference>
<dbReference type="PDB" id="3O76">
    <property type="method" value="X-ray"/>
    <property type="resolution" value="1.77 A"/>
    <property type="chains" value="A/B=2-210"/>
</dbReference>
<dbReference type="PDB" id="8C5D">
    <property type="method" value="X-ray"/>
    <property type="resolution" value="1.28 A"/>
    <property type="chains" value="A/B=1-210"/>
</dbReference>
<dbReference type="PDBsum" id="1BAY"/>
<dbReference type="PDBsum" id="1GLP"/>
<dbReference type="PDBsum" id="1GLQ"/>
<dbReference type="PDBsum" id="1GSY"/>
<dbReference type="PDBsum" id="1GTI"/>
<dbReference type="PDBsum" id="2GLR"/>
<dbReference type="PDBsum" id="2OA7"/>
<dbReference type="PDBsum" id="2OAC"/>
<dbReference type="PDBsum" id="2OAD"/>
<dbReference type="PDBsum" id="3O76"/>
<dbReference type="PDBsum" id="8C5D"/>
<dbReference type="SMR" id="P19157"/>
<dbReference type="BioGRID" id="200101">
    <property type="interactions" value="15"/>
</dbReference>
<dbReference type="FunCoup" id="P19157">
    <property type="interactions" value="1101"/>
</dbReference>
<dbReference type="IntAct" id="P19157">
    <property type="interactions" value="5"/>
</dbReference>
<dbReference type="MINT" id="P19157"/>
<dbReference type="STRING" id="10090.ENSMUSP00000129565"/>
<dbReference type="GlyGen" id="P19157">
    <property type="glycosylation" value="1 site, 1 O-linked glycan (1 site)"/>
</dbReference>
<dbReference type="iPTMnet" id="P19157"/>
<dbReference type="PhosphoSitePlus" id="P19157"/>
<dbReference type="SwissPalm" id="P19157"/>
<dbReference type="REPRODUCTION-2DPAGE" id="P19157"/>
<dbReference type="jPOST" id="P19157"/>
<dbReference type="PaxDb" id="10090-ENSMUSP00000129565"/>
<dbReference type="PeptideAtlas" id="P19157"/>
<dbReference type="ProteomicsDB" id="271107"/>
<dbReference type="Pumba" id="P19157"/>
<dbReference type="TopDownProteomics" id="P19157"/>
<dbReference type="DNASU" id="14870"/>
<dbReference type="Ensembl" id="ENSMUST00000169613.4">
    <property type="protein sequence ID" value="ENSMUSP00000129565.2"/>
    <property type="gene ID" value="ENSMUSG00000060803.7"/>
</dbReference>
<dbReference type="GeneID" id="14870"/>
<dbReference type="KEGG" id="mmu:14870"/>
<dbReference type="UCSC" id="uc008fyf.1">
    <property type="organism name" value="mouse"/>
</dbReference>
<dbReference type="AGR" id="MGI:95865"/>
<dbReference type="CTD" id="2950"/>
<dbReference type="MGI" id="MGI:95865">
    <property type="gene designation" value="Gstp1"/>
</dbReference>
<dbReference type="VEuPathDB" id="HostDB:ENSMUSG00000060803"/>
<dbReference type="eggNOG" id="KOG1695">
    <property type="taxonomic scope" value="Eukaryota"/>
</dbReference>
<dbReference type="GeneTree" id="ENSGT00940000162460"/>
<dbReference type="HOGENOM" id="CLU_039475_2_1_1"/>
<dbReference type="InParanoid" id="P19157"/>
<dbReference type="OMA" id="KKSCVFG"/>
<dbReference type="OrthoDB" id="4951845at2759"/>
<dbReference type="PhylomeDB" id="P19157"/>
<dbReference type="TreeFam" id="TF105321"/>
<dbReference type="BRENDA" id="2.5.1.18">
    <property type="organism ID" value="3474"/>
</dbReference>
<dbReference type="Reactome" id="R-MMU-156590">
    <property type="pathway name" value="Glutathione conjugation"/>
</dbReference>
<dbReference type="Reactome" id="R-MMU-3299685">
    <property type="pathway name" value="Detoxification of Reactive Oxygen Species"/>
</dbReference>
<dbReference type="Reactome" id="R-MMU-6798695">
    <property type="pathway name" value="Neutrophil degranulation"/>
</dbReference>
<dbReference type="Reactome" id="R-MMU-9753281">
    <property type="pathway name" value="Paracetamol ADME"/>
</dbReference>
<dbReference type="BioGRID-ORCS" id="14870">
    <property type="hits" value="3 hits in 77 CRISPR screens"/>
</dbReference>
<dbReference type="ChiTaRS" id="Gstp1">
    <property type="organism name" value="mouse"/>
</dbReference>
<dbReference type="EvolutionaryTrace" id="P19157"/>
<dbReference type="PRO" id="PR:P19157"/>
<dbReference type="Proteomes" id="UP000000589">
    <property type="component" value="Chromosome 19"/>
</dbReference>
<dbReference type="RNAct" id="P19157">
    <property type="molecule type" value="protein"/>
</dbReference>
<dbReference type="Bgee" id="ENSMUSG00000060803">
    <property type="expression patterns" value="Expressed in hepatobiliary system and 99 other cell types or tissues"/>
</dbReference>
<dbReference type="ExpressionAtlas" id="P19157">
    <property type="expression patterns" value="baseline and differential"/>
</dbReference>
<dbReference type="GO" id="GO:0005829">
    <property type="term" value="C:cytosol"/>
    <property type="evidence" value="ECO:0000314"/>
    <property type="project" value="FlyBase"/>
</dbReference>
<dbReference type="GO" id="GO:0005739">
    <property type="term" value="C:mitochondrion"/>
    <property type="evidence" value="ECO:0007669"/>
    <property type="project" value="UniProtKB-SubCell"/>
</dbReference>
<dbReference type="GO" id="GO:0005634">
    <property type="term" value="C:nucleus"/>
    <property type="evidence" value="ECO:0007669"/>
    <property type="project" value="UniProtKB-SubCell"/>
</dbReference>
<dbReference type="GO" id="GO:0032991">
    <property type="term" value="C:protein-containing complex"/>
    <property type="evidence" value="ECO:0000314"/>
    <property type="project" value="BHF-UCL"/>
</dbReference>
<dbReference type="GO" id="GO:0004364">
    <property type="term" value="F:glutathione transferase activity"/>
    <property type="evidence" value="ECO:0000314"/>
    <property type="project" value="MGI"/>
</dbReference>
<dbReference type="GO" id="GO:0008432">
    <property type="term" value="F:JUN kinase binding"/>
    <property type="evidence" value="ECO:0000353"/>
    <property type="project" value="BHF-UCL"/>
</dbReference>
<dbReference type="GO" id="GO:0030291">
    <property type="term" value="F:protein serine/threonine kinase inhibitor activity"/>
    <property type="evidence" value="ECO:0000315"/>
    <property type="project" value="BHF-UCL"/>
</dbReference>
<dbReference type="GO" id="GO:0031100">
    <property type="term" value="P:animal organ regeneration"/>
    <property type="evidence" value="ECO:0000250"/>
    <property type="project" value="BHF-UCL"/>
</dbReference>
<dbReference type="GO" id="GO:0071460">
    <property type="term" value="P:cellular response to cell-matrix adhesion"/>
    <property type="evidence" value="ECO:0000250"/>
    <property type="project" value="BHF-UCL"/>
</dbReference>
<dbReference type="GO" id="GO:0071364">
    <property type="term" value="P:cellular response to epidermal growth factor stimulus"/>
    <property type="evidence" value="ECO:0000250"/>
    <property type="project" value="BHF-UCL"/>
</dbReference>
<dbReference type="GO" id="GO:0071385">
    <property type="term" value="P:cellular response to glucocorticoid stimulus"/>
    <property type="evidence" value="ECO:0000250"/>
    <property type="project" value="BHF-UCL"/>
</dbReference>
<dbReference type="GO" id="GO:0032869">
    <property type="term" value="P:cellular response to insulin stimulus"/>
    <property type="evidence" value="ECO:0000250"/>
    <property type="project" value="BHF-UCL"/>
</dbReference>
<dbReference type="GO" id="GO:0071222">
    <property type="term" value="P:cellular response to lipopolysaccharide"/>
    <property type="evidence" value="ECO:0000314"/>
    <property type="project" value="BHF-UCL"/>
</dbReference>
<dbReference type="GO" id="GO:0035726">
    <property type="term" value="P:common myeloid progenitor cell proliferation"/>
    <property type="evidence" value="ECO:0000315"/>
    <property type="project" value="BHF-UCL"/>
</dbReference>
<dbReference type="GO" id="GO:1901687">
    <property type="term" value="P:glutathione derivative biosynthetic process"/>
    <property type="evidence" value="ECO:0000250"/>
    <property type="project" value="UniProtKB"/>
</dbReference>
<dbReference type="GO" id="GO:0006749">
    <property type="term" value="P:glutathione metabolic process"/>
    <property type="evidence" value="ECO:0000314"/>
    <property type="project" value="MGI"/>
</dbReference>
<dbReference type="GO" id="GO:0051122">
    <property type="term" value="P:hepoxilin biosynthetic process"/>
    <property type="evidence" value="ECO:0000250"/>
    <property type="project" value="UniProtKB"/>
</dbReference>
<dbReference type="GO" id="GO:0006954">
    <property type="term" value="P:inflammatory response"/>
    <property type="evidence" value="ECO:0000314"/>
    <property type="project" value="BHF-UCL"/>
</dbReference>
<dbReference type="GO" id="GO:0002674">
    <property type="term" value="P:negative regulation of acute inflammatory response"/>
    <property type="evidence" value="ECO:0000303"/>
    <property type="project" value="BHF-UCL"/>
</dbReference>
<dbReference type="GO" id="GO:0043066">
    <property type="term" value="P:negative regulation of apoptotic process"/>
    <property type="evidence" value="ECO:0000304"/>
    <property type="project" value="BHF-UCL"/>
</dbReference>
<dbReference type="GO" id="GO:0043124">
    <property type="term" value="P:negative regulation of canonical NF-kappaB signal transduction"/>
    <property type="evidence" value="ECO:0000314"/>
    <property type="project" value="BHF-UCL"/>
</dbReference>
<dbReference type="GO" id="GO:0070373">
    <property type="term" value="P:negative regulation of ERK1 and ERK2 cascade"/>
    <property type="evidence" value="ECO:0000314"/>
    <property type="project" value="BHF-UCL"/>
</dbReference>
<dbReference type="GO" id="GO:2001237">
    <property type="term" value="P:negative regulation of extrinsic apoptotic signaling pathway"/>
    <property type="evidence" value="ECO:0000250"/>
    <property type="project" value="BHF-UCL"/>
</dbReference>
<dbReference type="GO" id="GO:0048147">
    <property type="term" value="P:negative regulation of fibroblast proliferation"/>
    <property type="evidence" value="ECO:0000315"/>
    <property type="project" value="BHF-UCL"/>
</dbReference>
<dbReference type="GO" id="GO:0032691">
    <property type="term" value="P:negative regulation of interleukin-1 beta production"/>
    <property type="evidence" value="ECO:0000314"/>
    <property type="project" value="BHF-UCL"/>
</dbReference>
<dbReference type="GO" id="GO:0046329">
    <property type="term" value="P:negative regulation of JNK cascade"/>
    <property type="evidence" value="ECO:0000315"/>
    <property type="project" value="BHF-UCL"/>
</dbReference>
<dbReference type="GO" id="GO:0070664">
    <property type="term" value="P:negative regulation of leukocyte proliferation"/>
    <property type="evidence" value="ECO:0000315"/>
    <property type="project" value="BHF-UCL"/>
</dbReference>
<dbReference type="GO" id="GO:0071638">
    <property type="term" value="P:negative regulation of monocyte chemotactic protein-1 production"/>
    <property type="evidence" value="ECO:0000314"/>
    <property type="project" value="BHF-UCL"/>
</dbReference>
<dbReference type="GO" id="GO:2000429">
    <property type="term" value="P:negative regulation of neutrophil aggregation"/>
    <property type="evidence" value="ECO:0000303"/>
    <property type="project" value="BHF-UCL"/>
</dbReference>
<dbReference type="GO" id="GO:0032873">
    <property type="term" value="P:negative regulation of stress-activated MAPK cascade"/>
    <property type="evidence" value="ECO:0000314"/>
    <property type="project" value="BHF-UCL"/>
</dbReference>
<dbReference type="GO" id="GO:0000122">
    <property type="term" value="P:negative regulation of transcription by RNA polymerase II"/>
    <property type="evidence" value="ECO:0000315"/>
    <property type="project" value="BHF-UCL"/>
</dbReference>
<dbReference type="GO" id="GO:0032720">
    <property type="term" value="P:negative regulation of tumor necrosis factor production"/>
    <property type="evidence" value="ECO:0000314"/>
    <property type="project" value="BHF-UCL"/>
</dbReference>
<dbReference type="GO" id="GO:0014003">
    <property type="term" value="P:oligodendrocyte development"/>
    <property type="evidence" value="ECO:0000250"/>
    <property type="project" value="BHF-UCL"/>
</dbReference>
<dbReference type="GO" id="GO:0032930">
    <property type="term" value="P:positive regulation of superoxide anion generation"/>
    <property type="evidence" value="ECO:0000315"/>
    <property type="project" value="BHF-UCL"/>
</dbReference>
<dbReference type="GO" id="GO:0006693">
    <property type="term" value="P:prostaglandin metabolic process"/>
    <property type="evidence" value="ECO:0000250"/>
    <property type="project" value="UniProtKB"/>
</dbReference>
<dbReference type="GO" id="GO:0070372">
    <property type="term" value="P:regulation of ERK1 and ERK2 cascade"/>
    <property type="evidence" value="ECO:0000314"/>
    <property type="project" value="BHF-UCL"/>
</dbReference>
<dbReference type="GO" id="GO:0032872">
    <property type="term" value="P:regulation of stress-activated MAPK cascade"/>
    <property type="evidence" value="ECO:0000314"/>
    <property type="project" value="BHF-UCL"/>
</dbReference>
<dbReference type="GO" id="GO:0043200">
    <property type="term" value="P:response to amino acid"/>
    <property type="evidence" value="ECO:0000250"/>
    <property type="project" value="BHF-UCL"/>
</dbReference>
<dbReference type="GO" id="GO:0032355">
    <property type="term" value="P:response to estradiol"/>
    <property type="evidence" value="ECO:0000250"/>
    <property type="project" value="BHF-UCL"/>
</dbReference>
<dbReference type="GO" id="GO:0045471">
    <property type="term" value="P:response to ethanol"/>
    <property type="evidence" value="ECO:0000250"/>
    <property type="project" value="BHF-UCL"/>
</dbReference>
<dbReference type="GO" id="GO:0033591">
    <property type="term" value="P:response to L-ascorbic acid"/>
    <property type="evidence" value="ECO:0000250"/>
    <property type="project" value="BHF-UCL"/>
</dbReference>
<dbReference type="GO" id="GO:0031667">
    <property type="term" value="P:response to nutrient levels"/>
    <property type="evidence" value="ECO:0000250"/>
    <property type="project" value="BHF-UCL"/>
</dbReference>
<dbReference type="GO" id="GO:0000302">
    <property type="term" value="P:response to reactive oxygen species"/>
    <property type="evidence" value="ECO:0000314"/>
    <property type="project" value="BHF-UCL"/>
</dbReference>
<dbReference type="GO" id="GO:0009636">
    <property type="term" value="P:response to toxic substance"/>
    <property type="evidence" value="ECO:0000250"/>
    <property type="project" value="BHF-UCL"/>
</dbReference>
<dbReference type="GO" id="GO:0006805">
    <property type="term" value="P:xenobiotic metabolic process"/>
    <property type="evidence" value="ECO:0000250"/>
    <property type="project" value="UniProtKB"/>
</dbReference>
<dbReference type="CDD" id="cd03210">
    <property type="entry name" value="GST_C_Pi"/>
    <property type="match status" value="1"/>
</dbReference>
<dbReference type="CDD" id="cd03076">
    <property type="entry name" value="GST_N_Pi"/>
    <property type="match status" value="1"/>
</dbReference>
<dbReference type="FunFam" id="1.20.1050.10:FF:000047">
    <property type="entry name" value="Glutathione S-transferase P"/>
    <property type="match status" value="1"/>
</dbReference>
<dbReference type="FunFam" id="3.40.30.10:FF:000071">
    <property type="entry name" value="Glutathione S-transferase P"/>
    <property type="match status" value="1"/>
</dbReference>
<dbReference type="FunFam" id="3.40.30.10:FF:000392">
    <property type="entry name" value="Glutathione S-transferase pi 1"/>
    <property type="match status" value="1"/>
</dbReference>
<dbReference type="Gene3D" id="1.20.1050.10">
    <property type="match status" value="1"/>
</dbReference>
<dbReference type="Gene3D" id="3.40.30.10">
    <property type="entry name" value="Glutaredoxin"/>
    <property type="match status" value="1"/>
</dbReference>
<dbReference type="InterPro" id="IPR010987">
    <property type="entry name" value="Glutathione-S-Trfase_C-like"/>
</dbReference>
<dbReference type="InterPro" id="IPR036282">
    <property type="entry name" value="Glutathione-S-Trfase_C_sf"/>
</dbReference>
<dbReference type="InterPro" id="IPR004045">
    <property type="entry name" value="Glutathione_S-Trfase_N"/>
</dbReference>
<dbReference type="InterPro" id="IPR004046">
    <property type="entry name" value="GST_C"/>
</dbReference>
<dbReference type="InterPro" id="IPR003082">
    <property type="entry name" value="GST_pi"/>
</dbReference>
<dbReference type="InterPro" id="IPR050213">
    <property type="entry name" value="GST_superfamily"/>
</dbReference>
<dbReference type="InterPro" id="IPR036249">
    <property type="entry name" value="Thioredoxin-like_sf"/>
</dbReference>
<dbReference type="PANTHER" id="PTHR11571">
    <property type="entry name" value="GLUTATHIONE S-TRANSFERASE"/>
    <property type="match status" value="1"/>
</dbReference>
<dbReference type="PANTHER" id="PTHR11571:SF255">
    <property type="entry name" value="GLUTATHIONE S-TRANSFERASE P"/>
    <property type="match status" value="1"/>
</dbReference>
<dbReference type="Pfam" id="PF14497">
    <property type="entry name" value="GST_C_3"/>
    <property type="match status" value="1"/>
</dbReference>
<dbReference type="Pfam" id="PF02798">
    <property type="entry name" value="GST_N"/>
    <property type="match status" value="1"/>
</dbReference>
<dbReference type="PRINTS" id="PR01268">
    <property type="entry name" value="GSTRNSFRASEP"/>
</dbReference>
<dbReference type="SFLD" id="SFLDG01205">
    <property type="entry name" value="AMPS.1"/>
    <property type="match status" value="1"/>
</dbReference>
<dbReference type="SFLD" id="SFLDG00363">
    <property type="entry name" value="AMPS_(cytGST):_Alpha-__Mu-__Pi"/>
    <property type="match status" value="1"/>
</dbReference>
<dbReference type="SUPFAM" id="SSF47616">
    <property type="entry name" value="GST C-terminal domain-like"/>
    <property type="match status" value="1"/>
</dbReference>
<dbReference type="SUPFAM" id="SSF52833">
    <property type="entry name" value="Thioredoxin-like"/>
    <property type="match status" value="1"/>
</dbReference>
<dbReference type="PROSITE" id="PS50405">
    <property type="entry name" value="GST_CTER"/>
    <property type="match status" value="1"/>
</dbReference>
<dbReference type="PROSITE" id="PS50404">
    <property type="entry name" value="GST_NTER"/>
    <property type="match status" value="1"/>
</dbReference>
<name>GSTP1_MOUSE</name>
<keyword id="KW-0002">3D-structure</keyword>
<keyword id="KW-0007">Acetylation</keyword>
<keyword id="KW-0963">Cytoplasm</keyword>
<keyword id="KW-0903">Direct protein sequencing</keyword>
<keyword id="KW-0443">Lipid metabolism</keyword>
<keyword id="KW-0496">Mitochondrion</keyword>
<keyword id="KW-0539">Nucleus</keyword>
<keyword id="KW-0597">Phosphoprotein</keyword>
<keyword id="KW-1185">Reference proteome</keyword>
<keyword id="KW-0808">Transferase</keyword>
<reference key="1">
    <citation type="journal article" date="1990" name="Nucleic Acids Res.">
        <title>A cDNA sequence coding a class pi glutathione S-transferase of mouse.</title>
        <authorList>
            <person name="Hatayama I."/>
            <person name="Satoh K."/>
            <person name="Sato K."/>
        </authorList>
    </citation>
    <scope>NUCLEOTIDE SEQUENCE [MRNA]</scope>
    <source>
        <strain>BALB/cJ</strain>
        <tissue>Liver</tissue>
    </source>
</reference>
<reference key="2">
    <citation type="journal article" date="1994" name="Biochem. J.">
        <title>Isolation and characterization of two mouse PI class glutathione S-transferase genes.</title>
        <authorList>
            <person name="Bammler T.K."/>
            <person name="Smith C.A.D."/>
            <person name="Wolf R.C."/>
        </authorList>
    </citation>
    <scope>NUCLEOTIDE SEQUENCE [GENOMIC DNA]</scope>
</reference>
<reference key="3">
    <citation type="journal article" date="1994" name="J. Biol. Chem.">
        <title>Two murine GSTpi genes are arranged in tandem and are differentially expressed.</title>
        <authorList>
            <person name="Xu X."/>
            <person name="Stambrook P.J."/>
        </authorList>
    </citation>
    <scope>NUCLEOTIDE SEQUENCE [GENOMIC DNA]</scope>
    <source>
        <strain>129/SvJ</strain>
        <tissue>Liver</tissue>
    </source>
</reference>
<reference key="4">
    <citation type="submission" date="1994-05" db="EMBL/GenBank/DDBJ databases">
        <title>Molecular cloning of mouse preadipocyte growth factor.</title>
        <authorList>
            <person name="Kawada T."/>
            <person name="Aoki N."/>
            <person name="Kamei Y."/>
            <person name="Sugimoto E."/>
        </authorList>
    </citation>
    <scope>NUCLEOTIDE SEQUENCE [MRNA]</scope>
</reference>
<reference key="5">
    <citation type="journal article" date="2004" name="Genome Res.">
        <title>The status, quality, and expansion of the NIH full-length cDNA project: the Mammalian Gene Collection (MGC).</title>
        <authorList>
            <consortium name="The MGC Project Team"/>
        </authorList>
    </citation>
    <scope>NUCLEOTIDE SEQUENCE [LARGE SCALE MRNA]</scope>
</reference>
<reference key="6">
    <citation type="submission" date="2007-04" db="UniProtKB">
        <authorList>
            <person name="Lubec G."/>
            <person name="Klug S."/>
            <person name="Kang S.U."/>
        </authorList>
    </citation>
    <scope>PROTEIN SEQUENCE OF 2-12; 56-71; 122-141 AND 192-209</scope>
    <scope>IDENTIFICATION BY MASS SPECTROMETRY</scope>
    <source>
        <strain>C57BL/6J</strain>
        <tissue>Brain</tissue>
        <tissue>Hippocampus</tissue>
    </source>
</reference>
<reference key="7">
    <citation type="journal article" date="2005" name="Science">
        <title>The transcriptional landscape of the mammalian genome.</title>
        <authorList>
            <person name="Carninci P."/>
            <person name="Kasukawa T."/>
            <person name="Katayama S."/>
            <person name="Gough J."/>
            <person name="Frith M.C."/>
            <person name="Maeda N."/>
            <person name="Oyama R."/>
            <person name="Ravasi T."/>
            <person name="Lenhard B."/>
            <person name="Wells C."/>
            <person name="Kodzius R."/>
            <person name="Shimokawa K."/>
            <person name="Bajic V.B."/>
            <person name="Brenner S.E."/>
            <person name="Batalov S."/>
            <person name="Forrest A.R."/>
            <person name="Zavolan M."/>
            <person name="Davis M.J."/>
            <person name="Wilming L.G."/>
            <person name="Aidinis V."/>
            <person name="Allen J.E."/>
            <person name="Ambesi-Impiombato A."/>
            <person name="Apweiler R."/>
            <person name="Aturaliya R.N."/>
            <person name="Bailey T.L."/>
            <person name="Bansal M."/>
            <person name="Baxter L."/>
            <person name="Beisel K.W."/>
            <person name="Bersano T."/>
            <person name="Bono H."/>
            <person name="Chalk A.M."/>
            <person name="Chiu K.P."/>
            <person name="Choudhary V."/>
            <person name="Christoffels A."/>
            <person name="Clutterbuck D.R."/>
            <person name="Crowe M.L."/>
            <person name="Dalla E."/>
            <person name="Dalrymple B.P."/>
            <person name="de Bono B."/>
            <person name="Della Gatta G."/>
            <person name="di Bernardo D."/>
            <person name="Down T."/>
            <person name="Engstrom P."/>
            <person name="Fagiolini M."/>
            <person name="Faulkner G."/>
            <person name="Fletcher C.F."/>
            <person name="Fukushima T."/>
            <person name="Furuno M."/>
            <person name="Futaki S."/>
            <person name="Gariboldi M."/>
            <person name="Georgii-Hemming P."/>
            <person name="Gingeras T.R."/>
            <person name="Gojobori T."/>
            <person name="Green R.E."/>
            <person name="Gustincich S."/>
            <person name="Harbers M."/>
            <person name="Hayashi Y."/>
            <person name="Hensch T.K."/>
            <person name="Hirokawa N."/>
            <person name="Hill D."/>
            <person name="Huminiecki L."/>
            <person name="Iacono M."/>
            <person name="Ikeo K."/>
            <person name="Iwama A."/>
            <person name="Ishikawa T."/>
            <person name="Jakt M."/>
            <person name="Kanapin A."/>
            <person name="Katoh M."/>
            <person name="Kawasawa Y."/>
            <person name="Kelso J."/>
            <person name="Kitamura H."/>
            <person name="Kitano H."/>
            <person name="Kollias G."/>
            <person name="Krishnan S.P."/>
            <person name="Kruger A."/>
            <person name="Kummerfeld S.K."/>
            <person name="Kurochkin I.V."/>
            <person name="Lareau L.F."/>
            <person name="Lazarevic D."/>
            <person name="Lipovich L."/>
            <person name="Liu J."/>
            <person name="Liuni S."/>
            <person name="McWilliam S."/>
            <person name="Madan Babu M."/>
            <person name="Madera M."/>
            <person name="Marchionni L."/>
            <person name="Matsuda H."/>
            <person name="Matsuzawa S."/>
            <person name="Miki H."/>
            <person name="Mignone F."/>
            <person name="Miyake S."/>
            <person name="Morris K."/>
            <person name="Mottagui-Tabar S."/>
            <person name="Mulder N."/>
            <person name="Nakano N."/>
            <person name="Nakauchi H."/>
            <person name="Ng P."/>
            <person name="Nilsson R."/>
            <person name="Nishiguchi S."/>
            <person name="Nishikawa S."/>
            <person name="Nori F."/>
            <person name="Ohara O."/>
            <person name="Okazaki Y."/>
            <person name="Orlando V."/>
            <person name="Pang K.C."/>
            <person name="Pavan W.J."/>
            <person name="Pavesi G."/>
            <person name="Pesole G."/>
            <person name="Petrovsky N."/>
            <person name="Piazza S."/>
            <person name="Reed J."/>
            <person name="Reid J.F."/>
            <person name="Ring B.Z."/>
            <person name="Ringwald M."/>
            <person name="Rost B."/>
            <person name="Ruan Y."/>
            <person name="Salzberg S.L."/>
            <person name="Sandelin A."/>
            <person name="Schneider C."/>
            <person name="Schoenbach C."/>
            <person name="Sekiguchi K."/>
            <person name="Semple C.A."/>
            <person name="Seno S."/>
            <person name="Sessa L."/>
            <person name="Sheng Y."/>
            <person name="Shibata Y."/>
            <person name="Shimada H."/>
            <person name="Shimada K."/>
            <person name="Silva D."/>
            <person name="Sinclair B."/>
            <person name="Sperling S."/>
            <person name="Stupka E."/>
            <person name="Sugiura K."/>
            <person name="Sultana R."/>
            <person name="Takenaka Y."/>
            <person name="Taki K."/>
            <person name="Tammoja K."/>
            <person name="Tan S.L."/>
            <person name="Tang S."/>
            <person name="Taylor M.S."/>
            <person name="Tegner J."/>
            <person name="Teichmann S.A."/>
            <person name="Ueda H.R."/>
            <person name="van Nimwegen E."/>
            <person name="Verardo R."/>
            <person name="Wei C.L."/>
            <person name="Yagi K."/>
            <person name="Yamanishi H."/>
            <person name="Zabarovsky E."/>
            <person name="Zhu S."/>
            <person name="Zimmer A."/>
            <person name="Hide W."/>
            <person name="Bult C."/>
            <person name="Grimmond S.M."/>
            <person name="Teasdale R.D."/>
            <person name="Liu E.T."/>
            <person name="Brusic V."/>
            <person name="Quackenbush J."/>
            <person name="Wahlestedt C."/>
            <person name="Mattick J.S."/>
            <person name="Hume D.A."/>
            <person name="Kai C."/>
            <person name="Sasaki D."/>
            <person name="Tomaru Y."/>
            <person name="Fukuda S."/>
            <person name="Kanamori-Katayama M."/>
            <person name="Suzuki M."/>
            <person name="Aoki J."/>
            <person name="Arakawa T."/>
            <person name="Iida J."/>
            <person name="Imamura K."/>
            <person name="Itoh M."/>
            <person name="Kato T."/>
            <person name="Kawaji H."/>
            <person name="Kawagashira N."/>
            <person name="Kawashima T."/>
            <person name="Kojima M."/>
            <person name="Kondo S."/>
            <person name="Konno H."/>
            <person name="Nakano K."/>
            <person name="Ninomiya N."/>
            <person name="Nishio T."/>
            <person name="Okada M."/>
            <person name="Plessy C."/>
            <person name="Shibata K."/>
            <person name="Shiraki T."/>
            <person name="Suzuki S."/>
            <person name="Tagami M."/>
            <person name="Waki K."/>
            <person name="Watahiki A."/>
            <person name="Okamura-Oho Y."/>
            <person name="Suzuki H."/>
            <person name="Kawai J."/>
            <person name="Hayashizaki Y."/>
        </authorList>
    </citation>
    <scope>NUCLEOTIDE SEQUENCE [LARGE SCALE MRNA] OF 9-210</scope>
    <source>
        <strain>C57BL/6J</strain>
        <tissue>Embryo</tissue>
    </source>
</reference>
<reference key="8">
    <citation type="journal article" date="1995" name="Chem. Res. Toxicol.">
        <title>Purification, mass spectrometric characterization, and covalent modification of murine glutathione S-transferases.</title>
        <authorList>
            <person name="Mitchell A.E."/>
            <person name="Morin D."/>
            <person name="Lame M.W."/>
            <person name="Jones A.D."/>
        </authorList>
    </citation>
    <scope>CHARACTERIZATION</scope>
    <scope>MASS SPECTROMETRY</scope>
    <source>
        <strain>CD-1</strain>
        <tissue>Liver</tissue>
    </source>
</reference>
<reference key="9">
    <citation type="journal article" date="2010" name="Cell">
        <title>A tissue-specific atlas of mouse protein phosphorylation and expression.</title>
        <authorList>
            <person name="Huttlin E.L."/>
            <person name="Jedrychowski M.P."/>
            <person name="Elias J.E."/>
            <person name="Goswami T."/>
            <person name="Rad R."/>
            <person name="Beausoleil S.A."/>
            <person name="Villen J."/>
            <person name="Haas W."/>
            <person name="Sowa M.E."/>
            <person name="Gygi S.P."/>
        </authorList>
    </citation>
    <scope>IDENTIFICATION BY MASS SPECTROMETRY [LARGE SCALE ANALYSIS]</scope>
    <source>
        <tissue>Brain</tissue>
        <tissue>Brown adipose tissue</tissue>
        <tissue>Heart</tissue>
        <tissue>Kidney</tissue>
        <tissue>Liver</tissue>
        <tissue>Lung</tissue>
        <tissue>Pancreas</tissue>
        <tissue>Spleen</tissue>
        <tissue>Testis</tissue>
    </source>
</reference>
<reference key="10">
    <citation type="journal article" date="2013" name="Mol. Cell">
        <title>SIRT5-mediated lysine desuccinylation impacts diverse metabolic pathways.</title>
        <authorList>
            <person name="Park J."/>
            <person name="Chen Y."/>
            <person name="Tishkoff D.X."/>
            <person name="Peng C."/>
            <person name="Tan M."/>
            <person name="Dai L."/>
            <person name="Xie Z."/>
            <person name="Zhang Y."/>
            <person name="Zwaans B.M."/>
            <person name="Skinner M.E."/>
            <person name="Lombard D.B."/>
            <person name="Zhao Y."/>
        </authorList>
    </citation>
    <scope>SUCCINYLATION [LARGE SCALE ANALYSIS] AT LYS-103 AND LYS-116</scope>
    <scope>IDENTIFICATION BY MASS SPECTROMETRY [LARGE SCALE ANALYSIS]</scope>
    <source>
        <tissue>Liver</tissue>
    </source>
</reference>
<reference key="11">
    <citation type="journal article" date="1994" name="J. Mol. Biol.">
        <title>Molecular structure at 1.8 A of mouse liver class pi glutathione S-transferase complexed with S-(p-nitrobenzyl)glutathione and other inhibitors.</title>
        <authorList>
            <person name="Garcia-Saez I."/>
            <person name="Parraga A."/>
            <person name="Phillips M.F."/>
            <person name="Mantle T.J."/>
            <person name="Coll M."/>
        </authorList>
    </citation>
    <scope>X-RAY CRYSTALLOGRAPHY (1.8 ANGSTROMS) IN COMPLEX WITH GLUTATHIONE ANALOGS</scope>
</reference>
<reference key="12">
    <citation type="journal article" date="1998" name="J. Biol. Chem.">
        <title>The three-dimensional structure of Cys-47-modified mouse liver glutathione S-transferase P1-1. Carboxymethylation dramatically decreases the affinity for glutathione and is associated with a loss of electron density in the alphaB-310B region.</title>
        <authorList>
            <person name="Vega M.C."/>
            <person name="Walsh S.B."/>
            <person name="Mantle T.J."/>
            <person name="Coll M."/>
        </authorList>
    </citation>
    <scope>X-RAY CRYSTALLOGRAPHY (3.0 ANGSTROMS)</scope>
</reference>
<gene>
    <name evidence="7" type="primary">Gstp1</name>
    <name type="synonym">Gstpib</name>
</gene>
<accession>P19157</accession>
<accession>Q8BNY4</accession>
<feature type="initiator methionine" description="Removed" evidence="4">
    <location>
        <position position="1"/>
    </location>
</feature>
<feature type="chain" id="PRO_0000185903" description="Glutathione S-transferase P 1">
    <location>
        <begin position="2"/>
        <end position="210"/>
    </location>
</feature>
<feature type="domain" description="GST N-terminal">
    <location>
        <begin position="2"/>
        <end position="81"/>
    </location>
</feature>
<feature type="domain" description="GST C-terminal">
    <location>
        <begin position="83"/>
        <end position="204"/>
    </location>
</feature>
<feature type="binding site" evidence="6">
    <location>
        <position position="8"/>
    </location>
    <ligand>
        <name>glutathione</name>
        <dbReference type="ChEBI" id="CHEBI:57925"/>
    </ligand>
</feature>
<feature type="binding site" evidence="6">
    <location>
        <position position="14"/>
    </location>
    <ligand>
        <name>glutathione</name>
        <dbReference type="ChEBI" id="CHEBI:57925"/>
    </ligand>
</feature>
<feature type="binding site" evidence="6">
    <location>
        <position position="39"/>
    </location>
    <ligand>
        <name>glutathione</name>
        <dbReference type="ChEBI" id="CHEBI:57925"/>
    </ligand>
</feature>
<feature type="binding site" evidence="6">
    <location>
        <position position="45"/>
    </location>
    <ligand>
        <name>glutathione</name>
        <dbReference type="ChEBI" id="CHEBI:57925"/>
    </ligand>
</feature>
<feature type="binding site" evidence="6">
    <location>
        <begin position="52"/>
        <end position="53"/>
    </location>
    <ligand>
        <name>glutathione</name>
        <dbReference type="ChEBI" id="CHEBI:57925"/>
    </ligand>
</feature>
<feature type="binding site" evidence="6">
    <location>
        <begin position="65"/>
        <end position="66"/>
    </location>
    <ligand>
        <name>glutathione</name>
        <dbReference type="ChEBI" id="CHEBI:57925"/>
    </ligand>
</feature>
<feature type="modified residue" description="Phosphotyrosine; by EGFR" evidence="2">
    <location>
        <position position="4"/>
    </location>
</feature>
<feature type="modified residue" description="Phosphothreonine" evidence="2">
    <location>
        <position position="62"/>
    </location>
</feature>
<feature type="modified residue" description="N6-succinyllysine" evidence="8">
    <location>
        <position position="103"/>
    </location>
</feature>
<feature type="modified residue" description="N6-succinyllysine" evidence="8">
    <location>
        <position position="116"/>
    </location>
</feature>
<feature type="modified residue" description="N6-acetyllysine" evidence="2">
    <location>
        <position position="128"/>
    </location>
</feature>
<feature type="strand" evidence="12">
    <location>
        <begin position="4"/>
        <end position="8"/>
    </location>
</feature>
<feature type="strand" evidence="12">
    <location>
        <begin position="10"/>
        <end position="12"/>
    </location>
</feature>
<feature type="helix" evidence="12">
    <location>
        <begin position="13"/>
        <end position="15"/>
    </location>
</feature>
<feature type="helix" evidence="12">
    <location>
        <begin position="16"/>
        <end position="24"/>
    </location>
</feature>
<feature type="strand" evidence="12">
    <location>
        <begin position="30"/>
        <end position="33"/>
    </location>
</feature>
<feature type="helix" evidence="12">
    <location>
        <begin position="36"/>
        <end position="40"/>
    </location>
</feature>
<feature type="strand" evidence="9">
    <location>
        <begin position="42"/>
        <end position="44"/>
    </location>
</feature>
<feature type="helix" evidence="12">
    <location>
        <begin position="45"/>
        <end position="47"/>
    </location>
</feature>
<feature type="strand" evidence="10">
    <location>
        <begin position="49"/>
        <end position="51"/>
    </location>
</feature>
<feature type="strand" evidence="12">
    <location>
        <begin position="55"/>
        <end position="58"/>
    </location>
</feature>
<feature type="strand" evidence="12">
    <location>
        <begin position="61"/>
        <end position="65"/>
    </location>
</feature>
<feature type="helix" evidence="12">
    <location>
        <begin position="66"/>
        <end position="77"/>
    </location>
</feature>
<feature type="helix" evidence="12">
    <location>
        <begin position="84"/>
        <end position="110"/>
    </location>
</feature>
<feature type="helix" evidence="12">
    <location>
        <begin position="112"/>
        <end position="135"/>
    </location>
</feature>
<feature type="helix" evidence="12">
    <location>
        <begin position="138"/>
        <end position="140"/>
    </location>
</feature>
<feature type="strand" evidence="12">
    <location>
        <begin position="144"/>
        <end position="148"/>
    </location>
</feature>
<feature type="helix" evidence="12">
    <location>
        <begin position="151"/>
        <end position="166"/>
    </location>
</feature>
<feature type="turn" evidence="12">
    <location>
        <begin position="168"/>
        <end position="173"/>
    </location>
</feature>
<feature type="helix" evidence="12">
    <location>
        <begin position="175"/>
        <end position="185"/>
    </location>
</feature>
<feature type="helix" evidence="12">
    <location>
        <begin position="188"/>
        <end position="194"/>
    </location>
</feature>
<feature type="helix" evidence="12">
    <location>
        <begin position="197"/>
        <end position="200"/>
    </location>
</feature>
<feature type="strand" evidence="11">
    <location>
        <begin position="204"/>
        <end position="208"/>
    </location>
</feature>
<evidence type="ECO:0000250" key="1"/>
<evidence type="ECO:0000250" key="2">
    <source>
        <dbReference type="UniProtKB" id="P09211"/>
    </source>
</evidence>
<evidence type="ECO:0000269" key="3">
    <source>
    </source>
</evidence>
<evidence type="ECO:0000269" key="4">
    <source ref="6"/>
</evidence>
<evidence type="ECO:0000305" key="5"/>
<evidence type="ECO:0000305" key="6">
    <source>
    </source>
</evidence>
<evidence type="ECO:0000312" key="7">
    <source>
        <dbReference type="MGI" id="MGI:95865"/>
    </source>
</evidence>
<evidence type="ECO:0007744" key="8">
    <source>
    </source>
</evidence>
<evidence type="ECO:0007829" key="9">
    <source>
        <dbReference type="PDB" id="1GLQ"/>
    </source>
</evidence>
<evidence type="ECO:0007829" key="10">
    <source>
        <dbReference type="PDB" id="1GTI"/>
    </source>
</evidence>
<evidence type="ECO:0007829" key="11">
    <source>
        <dbReference type="PDB" id="3O76"/>
    </source>
</evidence>
<evidence type="ECO:0007829" key="12">
    <source>
        <dbReference type="PDB" id="8C5D"/>
    </source>
</evidence>
<organism>
    <name type="scientific">Mus musculus</name>
    <name type="common">Mouse</name>
    <dbReference type="NCBI Taxonomy" id="10090"/>
    <lineage>
        <taxon>Eukaryota</taxon>
        <taxon>Metazoa</taxon>
        <taxon>Chordata</taxon>
        <taxon>Craniata</taxon>
        <taxon>Vertebrata</taxon>
        <taxon>Euteleostomi</taxon>
        <taxon>Mammalia</taxon>
        <taxon>Eutheria</taxon>
        <taxon>Euarchontoglires</taxon>
        <taxon>Glires</taxon>
        <taxon>Rodentia</taxon>
        <taxon>Myomorpha</taxon>
        <taxon>Muroidea</taxon>
        <taxon>Muridae</taxon>
        <taxon>Murinae</taxon>
        <taxon>Mus</taxon>
        <taxon>Mus</taxon>
    </lineage>
</organism>
<proteinExistence type="evidence at protein level"/>
<protein>
    <recommendedName>
        <fullName evidence="5">Glutathione S-transferase P 1</fullName>
        <shortName>Gst P1</shortName>
        <ecNumber evidence="2">2.5.1.18</ecNumber>
    </recommendedName>
    <alternativeName>
        <fullName>GST YF-YF</fullName>
    </alternativeName>
    <alternativeName>
        <fullName>GST class-pi</fullName>
    </alternativeName>
    <alternativeName>
        <fullName>GST-piB</fullName>
    </alternativeName>
    <alternativeName>
        <fullName>Preadipocyte growth factor</fullName>
    </alternativeName>
</protein>
<sequence>MPPYTIVYFPVRGRCEAMRMLLADQGQSWKEEVVTIDTWMQGLLKPTCLYGQLPKFEDGDLTLYQSNAILRHLGRSLGLYGKNQREAAQMDMVNDGVEDLRGKYVTLIYTNYENGKNDYVKALPGHLKPFETLLSQNQGGKAFIVGDQISFADYNLLDLLLIHQVLAPGCLDNFPLLSAYVARLSARPKIKAFLSSPEHVNRPINGNGKQ</sequence>
<comment type="function">
    <text evidence="2">Conjugation of reduced glutathione to a wide number of exogenous and endogenous hydrophobic electrophiles. Involved in the formation of glutathione conjugates of both prostaglandin A2 (PGA2) and prostaglandin J2 (PGJ2). Participates in the formation of novel hepoxilin regioisomers. Negatively regulates CDK5 activity via p25/p35 translocation to prevent neurodegeneration.</text>
</comment>
<comment type="catalytic activity">
    <reaction evidence="2">
        <text>RX + glutathione = an S-substituted glutathione + a halide anion + H(+)</text>
        <dbReference type="Rhea" id="RHEA:16437"/>
        <dbReference type="ChEBI" id="CHEBI:15378"/>
        <dbReference type="ChEBI" id="CHEBI:16042"/>
        <dbReference type="ChEBI" id="CHEBI:17792"/>
        <dbReference type="ChEBI" id="CHEBI:57925"/>
        <dbReference type="ChEBI" id="CHEBI:90779"/>
        <dbReference type="EC" id="2.5.1.18"/>
    </reaction>
    <physiologicalReaction direction="left-to-right" evidence="2">
        <dbReference type="Rhea" id="RHEA:16438"/>
    </physiologicalReaction>
</comment>
<comment type="catalytic activity">
    <reaction evidence="2">
        <text>prostaglandin J2 + glutathione = prostaglandin J2-S-(R)-glutathione</text>
        <dbReference type="Rhea" id="RHEA:50804"/>
        <dbReference type="ChEBI" id="CHEBI:57925"/>
        <dbReference type="ChEBI" id="CHEBI:133396"/>
        <dbReference type="ChEBI" id="CHEBI:133771"/>
    </reaction>
    <physiologicalReaction direction="left-to-right" evidence="2">
        <dbReference type="Rhea" id="RHEA:50805"/>
    </physiologicalReaction>
</comment>
<comment type="catalytic activity">
    <reaction evidence="2">
        <text>prostaglandin J2 + glutathione = prostaglandin J2-S-(S)-glutathione</text>
        <dbReference type="Rhea" id="RHEA:50808"/>
        <dbReference type="ChEBI" id="CHEBI:57925"/>
        <dbReference type="ChEBI" id="CHEBI:133396"/>
        <dbReference type="ChEBI" id="CHEBI:133772"/>
    </reaction>
    <physiologicalReaction direction="left-to-right" evidence="2">
        <dbReference type="Rhea" id="RHEA:50809"/>
    </physiologicalReaction>
</comment>
<comment type="catalytic activity">
    <reaction evidence="2">
        <text>prostaglandin A2 + glutathione = prostaglandin A2-S-(S)-glutathione</text>
        <dbReference type="Rhea" id="RHEA:50800"/>
        <dbReference type="ChEBI" id="CHEBI:57925"/>
        <dbReference type="ChEBI" id="CHEBI:133370"/>
        <dbReference type="ChEBI" id="CHEBI:133769"/>
    </reaction>
    <physiologicalReaction direction="left-to-right" evidence="2">
        <dbReference type="Rhea" id="RHEA:50801"/>
    </physiologicalReaction>
</comment>
<comment type="catalytic activity">
    <reaction evidence="2">
        <text>11(S)-hydroxy-14(S),15(S)-epoxy-(5Z,8Z,12E)-eicosatrienoate + glutathione = (11S,15S)-dihydroxy-14(R)-S-glutathionyl-(5Z,8Z,12E)-eicosatrienoate</text>
        <dbReference type="Rhea" id="RHEA:50260"/>
        <dbReference type="ChEBI" id="CHEBI:57925"/>
        <dbReference type="ChEBI" id="CHEBI:132200"/>
        <dbReference type="ChEBI" id="CHEBI:132201"/>
    </reaction>
    <physiologicalReaction direction="left-to-right" evidence="2">
        <dbReference type="Rhea" id="RHEA:50261"/>
    </physiologicalReaction>
</comment>
<comment type="subunit">
    <text evidence="1">Homodimer. Interacts with CDK5 (By similarity).</text>
</comment>
<comment type="subcellular location">
    <subcellularLocation>
        <location evidence="1">Cytoplasm</location>
    </subcellularLocation>
    <subcellularLocation>
        <location evidence="1">Mitochondrion</location>
    </subcellularLocation>
    <subcellularLocation>
        <location evidence="1">Nucleus</location>
    </subcellularLocation>
    <text evidence="1">The 83 N-terminal amino acids function as un uncleaved transit peptide, and arginine residues within it are crucial for mitochondrial localization.</text>
</comment>
<comment type="tissue specificity">
    <text>Ubiquitously expressed.</text>
</comment>
<comment type="mass spectrometry"/>
<comment type="similarity">
    <text evidence="5">Belongs to the GST superfamily. Pi family.</text>
</comment>